<dbReference type="EC" id="6.2.1.5" evidence="1"/>
<dbReference type="EMBL" id="AE004437">
    <property type="protein sequence ID" value="AAG19826.1"/>
    <property type="status" value="ALT_INIT"/>
    <property type="molecule type" value="Genomic_DNA"/>
</dbReference>
<dbReference type="PIR" id="F84307">
    <property type="entry name" value="F84307"/>
</dbReference>
<dbReference type="RefSeq" id="WP_012289349.1">
    <property type="nucleotide sequence ID" value="NC_002607.1"/>
</dbReference>
<dbReference type="SMR" id="Q9HPP1"/>
<dbReference type="FunCoup" id="Q9HPP1">
    <property type="interactions" value="141"/>
</dbReference>
<dbReference type="STRING" id="64091.VNG_1541G"/>
<dbReference type="PaxDb" id="64091-VNG_1541G"/>
<dbReference type="GeneID" id="89349822"/>
<dbReference type="KEGG" id="hal:VNG_1541G"/>
<dbReference type="PATRIC" id="fig|64091.14.peg.1177"/>
<dbReference type="HOGENOM" id="CLU_037430_0_2_2"/>
<dbReference type="InParanoid" id="Q9HPP1"/>
<dbReference type="OrthoDB" id="146449at2157"/>
<dbReference type="PhylomeDB" id="Q9HPP1"/>
<dbReference type="UniPathway" id="UPA00223">
    <property type="reaction ID" value="UER00999"/>
</dbReference>
<dbReference type="Proteomes" id="UP000000554">
    <property type="component" value="Chromosome"/>
</dbReference>
<dbReference type="GO" id="GO:0042709">
    <property type="term" value="C:succinate-CoA ligase complex"/>
    <property type="evidence" value="ECO:0000318"/>
    <property type="project" value="GO_Central"/>
</dbReference>
<dbReference type="GO" id="GO:0005524">
    <property type="term" value="F:ATP binding"/>
    <property type="evidence" value="ECO:0007669"/>
    <property type="project" value="UniProtKB-UniRule"/>
</dbReference>
<dbReference type="GO" id="GO:0000287">
    <property type="term" value="F:magnesium ion binding"/>
    <property type="evidence" value="ECO:0007669"/>
    <property type="project" value="UniProtKB-UniRule"/>
</dbReference>
<dbReference type="GO" id="GO:0004775">
    <property type="term" value="F:succinate-CoA ligase (ADP-forming) activity"/>
    <property type="evidence" value="ECO:0000318"/>
    <property type="project" value="GO_Central"/>
</dbReference>
<dbReference type="GO" id="GO:0004776">
    <property type="term" value="F:succinate-CoA ligase (GDP-forming) activity"/>
    <property type="evidence" value="ECO:0007669"/>
    <property type="project" value="RHEA"/>
</dbReference>
<dbReference type="GO" id="GO:0006104">
    <property type="term" value="P:succinyl-CoA metabolic process"/>
    <property type="evidence" value="ECO:0000318"/>
    <property type="project" value="GO_Central"/>
</dbReference>
<dbReference type="GO" id="GO:0006099">
    <property type="term" value="P:tricarboxylic acid cycle"/>
    <property type="evidence" value="ECO:0000318"/>
    <property type="project" value="GO_Central"/>
</dbReference>
<dbReference type="FunFam" id="3.30.470.20:FF:000002">
    <property type="entry name" value="Succinate--CoA ligase [ADP-forming] subunit beta"/>
    <property type="match status" value="1"/>
</dbReference>
<dbReference type="FunFam" id="3.40.50.261:FF:000007">
    <property type="entry name" value="Succinate--CoA ligase [ADP-forming] subunit beta"/>
    <property type="match status" value="1"/>
</dbReference>
<dbReference type="Gene3D" id="3.30.1490.20">
    <property type="entry name" value="ATP-grasp fold, A domain"/>
    <property type="match status" value="1"/>
</dbReference>
<dbReference type="Gene3D" id="3.30.470.20">
    <property type="entry name" value="ATP-grasp fold, B domain"/>
    <property type="match status" value="1"/>
</dbReference>
<dbReference type="Gene3D" id="3.40.50.261">
    <property type="entry name" value="Succinyl-CoA synthetase domains"/>
    <property type="match status" value="1"/>
</dbReference>
<dbReference type="HAMAP" id="MF_00558">
    <property type="entry name" value="Succ_CoA_beta"/>
    <property type="match status" value="1"/>
</dbReference>
<dbReference type="InterPro" id="IPR011761">
    <property type="entry name" value="ATP-grasp"/>
</dbReference>
<dbReference type="InterPro" id="IPR013650">
    <property type="entry name" value="ATP-grasp_succ-CoA_synth-type"/>
</dbReference>
<dbReference type="InterPro" id="IPR013815">
    <property type="entry name" value="ATP_grasp_subdomain_1"/>
</dbReference>
<dbReference type="InterPro" id="IPR017866">
    <property type="entry name" value="Succ-CoA_synthase_bsu_CS"/>
</dbReference>
<dbReference type="InterPro" id="IPR005811">
    <property type="entry name" value="SUCC_ACL_C"/>
</dbReference>
<dbReference type="InterPro" id="IPR005809">
    <property type="entry name" value="Succ_CoA_ligase-like_bsu"/>
</dbReference>
<dbReference type="InterPro" id="IPR016102">
    <property type="entry name" value="Succinyl-CoA_synth-like"/>
</dbReference>
<dbReference type="NCBIfam" id="NF001913">
    <property type="entry name" value="PRK00696.1"/>
    <property type="match status" value="1"/>
</dbReference>
<dbReference type="NCBIfam" id="TIGR01016">
    <property type="entry name" value="sucCoAbeta"/>
    <property type="match status" value="1"/>
</dbReference>
<dbReference type="PANTHER" id="PTHR11815:SF10">
    <property type="entry name" value="SUCCINATE--COA LIGASE [GDP-FORMING] SUBUNIT BETA, MITOCHONDRIAL"/>
    <property type="match status" value="1"/>
</dbReference>
<dbReference type="PANTHER" id="PTHR11815">
    <property type="entry name" value="SUCCINYL-COA SYNTHETASE BETA CHAIN"/>
    <property type="match status" value="1"/>
</dbReference>
<dbReference type="Pfam" id="PF08442">
    <property type="entry name" value="ATP-grasp_2"/>
    <property type="match status" value="1"/>
</dbReference>
<dbReference type="Pfam" id="PF00549">
    <property type="entry name" value="Ligase_CoA"/>
    <property type="match status" value="1"/>
</dbReference>
<dbReference type="PIRSF" id="PIRSF001554">
    <property type="entry name" value="SucCS_beta"/>
    <property type="match status" value="1"/>
</dbReference>
<dbReference type="SUPFAM" id="SSF56059">
    <property type="entry name" value="Glutathione synthetase ATP-binding domain-like"/>
    <property type="match status" value="1"/>
</dbReference>
<dbReference type="SUPFAM" id="SSF52210">
    <property type="entry name" value="Succinyl-CoA synthetase domains"/>
    <property type="match status" value="1"/>
</dbReference>
<dbReference type="PROSITE" id="PS50975">
    <property type="entry name" value="ATP_GRASP"/>
    <property type="match status" value="1"/>
</dbReference>
<dbReference type="PROSITE" id="PS01217">
    <property type="entry name" value="SUCCINYL_COA_LIG_3"/>
    <property type="match status" value="1"/>
</dbReference>
<gene>
    <name evidence="1" type="primary">sucC</name>
    <name type="ordered locus">VNG_1541G</name>
</gene>
<comment type="function">
    <text evidence="1">Succinyl-CoA synthetase functions in the citric acid cycle (TCA), coupling the hydrolysis of succinyl-CoA to the synthesis of either ATP or GTP and thus represents the only step of substrate-level phosphorylation in the TCA. The beta subunit provides nucleotide specificity of the enzyme and binds the substrate succinate, while the binding sites for coenzyme A and phosphate are found in the alpha subunit.</text>
</comment>
<comment type="catalytic activity">
    <reaction evidence="1">
        <text>succinate + ATP + CoA = succinyl-CoA + ADP + phosphate</text>
        <dbReference type="Rhea" id="RHEA:17661"/>
        <dbReference type="ChEBI" id="CHEBI:30031"/>
        <dbReference type="ChEBI" id="CHEBI:30616"/>
        <dbReference type="ChEBI" id="CHEBI:43474"/>
        <dbReference type="ChEBI" id="CHEBI:57287"/>
        <dbReference type="ChEBI" id="CHEBI:57292"/>
        <dbReference type="ChEBI" id="CHEBI:456216"/>
        <dbReference type="EC" id="6.2.1.5"/>
    </reaction>
    <physiologicalReaction direction="right-to-left" evidence="1">
        <dbReference type="Rhea" id="RHEA:17663"/>
    </physiologicalReaction>
</comment>
<comment type="catalytic activity">
    <reaction evidence="1">
        <text>GTP + succinate + CoA = succinyl-CoA + GDP + phosphate</text>
        <dbReference type="Rhea" id="RHEA:22120"/>
        <dbReference type="ChEBI" id="CHEBI:30031"/>
        <dbReference type="ChEBI" id="CHEBI:37565"/>
        <dbReference type="ChEBI" id="CHEBI:43474"/>
        <dbReference type="ChEBI" id="CHEBI:57287"/>
        <dbReference type="ChEBI" id="CHEBI:57292"/>
        <dbReference type="ChEBI" id="CHEBI:58189"/>
    </reaction>
    <physiologicalReaction direction="right-to-left" evidence="1">
        <dbReference type="Rhea" id="RHEA:22122"/>
    </physiologicalReaction>
</comment>
<comment type="cofactor">
    <cofactor evidence="1">
        <name>Mg(2+)</name>
        <dbReference type="ChEBI" id="CHEBI:18420"/>
    </cofactor>
    <text evidence="1">Binds 1 Mg(2+) ion per subunit.</text>
</comment>
<comment type="pathway">
    <text evidence="1">Carbohydrate metabolism; tricarboxylic acid cycle; succinate from succinyl-CoA (ligase route): step 1/1.</text>
</comment>
<comment type="subunit">
    <text evidence="1">Heterotetramer of two alpha and two beta subunits.</text>
</comment>
<comment type="similarity">
    <text evidence="1">Belongs to the succinate/malate CoA ligase beta subunit family.</text>
</comment>
<comment type="sequence caution" evidence="2">
    <conflict type="erroneous initiation">
        <sequence resource="EMBL-CDS" id="AAG19826"/>
    </conflict>
</comment>
<sequence>MKLHEYQAKEVFADAGIPTPESALATSVDEAVEVADALDYPVAVKAQVHVGGRGKAGGIKLAENTAEAREAAESILGMDLKGYTVDRVLVEEAVDFTNELYVGVTMDRSEGAPVVMVSERGGVDIESVAEEAPEDIVREHVDPSFGLQAYQARNAVYDAGIEQDVAGDVAKIVQGVYDLWADSDATEVEINPVMVTSERDVVAADAVMKLDEDALFRQPAFADMEEDAAEDDLEAKANEYGFDYVRLDGNTGIIGNGAGLVMTTLDLVDYYGGQPANFLDIGGGAKADRVANALDMVFSDENVDSVVFNIFGGITRGDEVAKGINSALEQFDEIPTPVVVRLAGTNAAEGREILNDDLVTVEETLEGAVQRAVEYADEEDIQ</sequence>
<protein>
    <recommendedName>
        <fullName evidence="1">Succinate--CoA ligase [ADP-forming] subunit beta</fullName>
        <ecNumber evidence="1">6.2.1.5</ecNumber>
    </recommendedName>
    <alternativeName>
        <fullName evidence="1">Succinyl-CoA synthetase subunit beta</fullName>
        <shortName evidence="1">SCS-beta</shortName>
    </alternativeName>
</protein>
<evidence type="ECO:0000255" key="1">
    <source>
        <dbReference type="HAMAP-Rule" id="MF_00558"/>
    </source>
</evidence>
<evidence type="ECO:0000305" key="2"/>
<proteinExistence type="inferred from homology"/>
<accession>Q9HPP1</accession>
<name>SUCC_HALSA</name>
<reference key="1">
    <citation type="journal article" date="2000" name="Proc. Natl. Acad. Sci. U.S.A.">
        <title>Genome sequence of Halobacterium species NRC-1.</title>
        <authorList>
            <person name="Ng W.V."/>
            <person name="Kennedy S.P."/>
            <person name="Mahairas G.G."/>
            <person name="Berquist B."/>
            <person name="Pan M."/>
            <person name="Shukla H.D."/>
            <person name="Lasky S.R."/>
            <person name="Baliga N.S."/>
            <person name="Thorsson V."/>
            <person name="Sbrogna J."/>
            <person name="Swartzell S."/>
            <person name="Weir D."/>
            <person name="Hall J."/>
            <person name="Dahl T.A."/>
            <person name="Welti R."/>
            <person name="Goo Y.A."/>
            <person name="Leithauser B."/>
            <person name="Keller K."/>
            <person name="Cruz R."/>
            <person name="Danson M.J."/>
            <person name="Hough D.W."/>
            <person name="Maddocks D.G."/>
            <person name="Jablonski P.E."/>
            <person name="Krebs M.P."/>
            <person name="Angevine C.M."/>
            <person name="Dale H."/>
            <person name="Isenbarger T.A."/>
            <person name="Peck R.F."/>
            <person name="Pohlschroder M."/>
            <person name="Spudich J.L."/>
            <person name="Jung K.-H."/>
            <person name="Alam M."/>
            <person name="Freitas T."/>
            <person name="Hou S."/>
            <person name="Daniels C.J."/>
            <person name="Dennis P.P."/>
            <person name="Omer A.D."/>
            <person name="Ebhardt H."/>
            <person name="Lowe T.M."/>
            <person name="Liang P."/>
            <person name="Riley M."/>
            <person name="Hood L."/>
            <person name="DasSarma S."/>
        </authorList>
    </citation>
    <scope>NUCLEOTIDE SEQUENCE [LARGE SCALE GENOMIC DNA]</scope>
    <source>
        <strain>ATCC 700922 / JCM 11081 / NRC-1</strain>
    </source>
</reference>
<keyword id="KW-0067">ATP-binding</keyword>
<keyword id="KW-0436">Ligase</keyword>
<keyword id="KW-0460">Magnesium</keyword>
<keyword id="KW-0479">Metal-binding</keyword>
<keyword id="KW-0547">Nucleotide-binding</keyword>
<keyword id="KW-1185">Reference proteome</keyword>
<keyword id="KW-0816">Tricarboxylic acid cycle</keyword>
<feature type="chain" id="PRO_0000102884" description="Succinate--CoA ligase [ADP-forming] subunit beta">
    <location>
        <begin position="1"/>
        <end position="382"/>
    </location>
</feature>
<feature type="domain" description="ATP-grasp" evidence="1">
    <location>
        <begin position="9"/>
        <end position="236"/>
    </location>
</feature>
<feature type="binding site" evidence="1">
    <location>
        <position position="45"/>
    </location>
    <ligand>
        <name>ATP</name>
        <dbReference type="ChEBI" id="CHEBI:30616"/>
    </ligand>
</feature>
<feature type="binding site" evidence="1">
    <location>
        <begin position="52"/>
        <end position="54"/>
    </location>
    <ligand>
        <name>ATP</name>
        <dbReference type="ChEBI" id="CHEBI:30616"/>
    </ligand>
</feature>
<feature type="binding site" evidence="1">
    <location>
        <position position="91"/>
    </location>
    <ligand>
        <name>ATP</name>
        <dbReference type="ChEBI" id="CHEBI:30616"/>
    </ligand>
</feature>
<feature type="binding site" evidence="1">
    <location>
        <position position="94"/>
    </location>
    <ligand>
        <name>ATP</name>
        <dbReference type="ChEBI" id="CHEBI:30616"/>
    </ligand>
</feature>
<feature type="binding site" evidence="1">
    <location>
        <position position="99"/>
    </location>
    <ligand>
        <name>ATP</name>
        <dbReference type="ChEBI" id="CHEBI:30616"/>
    </ligand>
</feature>
<feature type="binding site" evidence="1">
    <location>
        <position position="191"/>
    </location>
    <ligand>
        <name>Mg(2+)</name>
        <dbReference type="ChEBI" id="CHEBI:18420"/>
    </ligand>
</feature>
<feature type="binding site" evidence="1">
    <location>
        <position position="205"/>
    </location>
    <ligand>
        <name>Mg(2+)</name>
        <dbReference type="ChEBI" id="CHEBI:18420"/>
    </ligand>
</feature>
<feature type="binding site" evidence="1">
    <location>
        <position position="256"/>
    </location>
    <ligand>
        <name>substrate</name>
        <note>ligand shared with subunit alpha</note>
    </ligand>
</feature>
<feature type="binding site" evidence="1">
    <location>
        <begin position="313"/>
        <end position="315"/>
    </location>
    <ligand>
        <name>substrate</name>
        <note>ligand shared with subunit alpha</note>
    </ligand>
</feature>
<organism>
    <name type="scientific">Halobacterium salinarum (strain ATCC 700922 / JCM 11081 / NRC-1)</name>
    <name type="common">Halobacterium halobium</name>
    <dbReference type="NCBI Taxonomy" id="64091"/>
    <lineage>
        <taxon>Archaea</taxon>
        <taxon>Methanobacteriati</taxon>
        <taxon>Methanobacteriota</taxon>
        <taxon>Stenosarchaea group</taxon>
        <taxon>Halobacteria</taxon>
        <taxon>Halobacteriales</taxon>
        <taxon>Halobacteriaceae</taxon>
        <taxon>Halobacterium</taxon>
        <taxon>Halobacterium salinarum NRC-34001</taxon>
    </lineage>
</organism>